<proteinExistence type="evidence at transcript level"/>
<comment type="function">
    <text evidence="1">May act as a scaffolding protein within caveolar membranes, functionally participating in formation of caveolae or caveolae-like vesicles.</text>
</comment>
<comment type="subcellular location">
    <subcellularLocation>
        <location evidence="4">Cell membrane</location>
        <topology evidence="4">Lipid-anchor</topology>
    </subcellularLocation>
    <subcellularLocation>
        <location evidence="3">Membrane</location>
        <location evidence="3">Caveola</location>
    </subcellularLocation>
</comment>
<comment type="PTM">
    <text evidence="4">May be palmitoylated.</text>
</comment>
<comment type="similarity">
    <text evidence="4">Belongs to the band 7/mec-2 family. Flotillin subfamily.</text>
</comment>
<gene>
    <name type="primary">FLOT1</name>
    <name type="ordered locus">At5g25250</name>
    <name type="ORF">F21J6.108</name>
</gene>
<sequence>MFKVARASQYLAITGAGIEDIKLSKKSWVFPWQSCTVFDVSPVNYTFKVQAMSAEKLPFVLPAVFTIGPRVDDDDALILYARLISPHDKDSNHVHELVEGVIEGETRVLAASMTMEEIFKGTKEFKKEVFDKVQLELNQFGLVIYNANVKQLVDVPGHEYFSYLGQKTQMEAANQARIDVSEAKMKGEIGAKERTGLTLQNAAKIDAESKIISMQRQGEGTKEEIKVRTEVKVFENQKEADVAKANAELAMKKAAWTKDAQVAEVEATKAVALREAELQTQVEKMNALTRTEKLKAEFLSKASVEYETKVQEANWELYNKQKQAEAVLYEKQKQAEAQKAQADAAFYSKQKEAEGLVALASAQGTYLRTLLDAVQNDYSCLRDFLMINNGIYQEIAKTNAMAVRDLQPKISVWNHGGEQGGGSGNAMKDIAGLYKMLPPVLDTVYEQTGMQPPAWIGTLRGAEPKQVTRS</sequence>
<keyword id="KW-1003">Cell membrane</keyword>
<keyword id="KW-0175">Coiled coil</keyword>
<keyword id="KW-0449">Lipoprotein</keyword>
<keyword id="KW-0472">Membrane</keyword>
<keyword id="KW-0564">Palmitate</keyword>
<keyword id="KW-1185">Reference proteome</keyword>
<name>FLOT1_ARATH</name>
<evidence type="ECO:0000250" key="1"/>
<evidence type="ECO:0000255" key="2"/>
<evidence type="ECO:0000269" key="3">
    <source>
    </source>
</evidence>
<evidence type="ECO:0000305" key="4"/>
<dbReference type="EMBL" id="AC006259">
    <property type="status" value="NOT_ANNOTATED_CDS"/>
    <property type="molecule type" value="Genomic_DNA"/>
</dbReference>
<dbReference type="EMBL" id="CP002688">
    <property type="protein sequence ID" value="AED93417.1"/>
    <property type="molecule type" value="Genomic_DNA"/>
</dbReference>
<dbReference type="EMBL" id="BT022021">
    <property type="protein sequence ID" value="AAY25433.1"/>
    <property type="molecule type" value="mRNA"/>
</dbReference>
<dbReference type="EMBL" id="AK229271">
    <property type="protein sequence ID" value="BAF01135.1"/>
    <property type="molecule type" value="mRNA"/>
</dbReference>
<dbReference type="EMBL" id="BT026368">
    <property type="protein sequence ID" value="ABH04475.1"/>
    <property type="molecule type" value="mRNA"/>
</dbReference>
<dbReference type="RefSeq" id="NP_197907.1">
    <property type="nucleotide sequence ID" value="NM_122434.3"/>
</dbReference>
<dbReference type="SMR" id="Q501E6"/>
<dbReference type="BioGRID" id="17871">
    <property type="interactions" value="3"/>
</dbReference>
<dbReference type="FunCoup" id="Q501E6">
    <property type="interactions" value="95"/>
</dbReference>
<dbReference type="IntAct" id="Q501E6">
    <property type="interactions" value="4"/>
</dbReference>
<dbReference type="STRING" id="3702.Q501E6"/>
<dbReference type="PaxDb" id="3702-AT5G25250.1"/>
<dbReference type="ProteomicsDB" id="230015"/>
<dbReference type="EnsemblPlants" id="AT5G25250.1">
    <property type="protein sequence ID" value="AT5G25250.1"/>
    <property type="gene ID" value="AT5G25250"/>
</dbReference>
<dbReference type="GeneID" id="832596"/>
<dbReference type="Gramene" id="AT5G25250.1">
    <property type="protein sequence ID" value="AT5G25250.1"/>
    <property type="gene ID" value="AT5G25250"/>
</dbReference>
<dbReference type="KEGG" id="ath:AT5G25250"/>
<dbReference type="Araport" id="AT5G25250"/>
<dbReference type="TAIR" id="AT5G25250">
    <property type="gene designation" value="FLOT1"/>
</dbReference>
<dbReference type="eggNOG" id="KOG2668">
    <property type="taxonomic scope" value="Eukaryota"/>
</dbReference>
<dbReference type="HOGENOM" id="CLU_030844_1_1_1"/>
<dbReference type="InParanoid" id="Q501E6"/>
<dbReference type="OMA" id="IHDQTGM"/>
<dbReference type="PhylomeDB" id="Q501E6"/>
<dbReference type="PRO" id="PR:Q501E6"/>
<dbReference type="Proteomes" id="UP000006548">
    <property type="component" value="Chromosome 5"/>
</dbReference>
<dbReference type="ExpressionAtlas" id="Q501E6">
    <property type="expression patterns" value="baseline and differential"/>
</dbReference>
<dbReference type="GO" id="GO:0005901">
    <property type="term" value="C:caveola"/>
    <property type="evidence" value="ECO:0007669"/>
    <property type="project" value="UniProtKB-SubCell"/>
</dbReference>
<dbReference type="GO" id="GO:0005768">
    <property type="term" value="C:endosome"/>
    <property type="evidence" value="ECO:0000314"/>
    <property type="project" value="TAIR"/>
</dbReference>
<dbReference type="GO" id="GO:0000325">
    <property type="term" value="C:plant-type vacuole"/>
    <property type="evidence" value="ECO:0007005"/>
    <property type="project" value="TAIR"/>
</dbReference>
<dbReference type="GO" id="GO:0005886">
    <property type="term" value="C:plasma membrane"/>
    <property type="evidence" value="ECO:0000314"/>
    <property type="project" value="TAIR"/>
</dbReference>
<dbReference type="GO" id="GO:0044853">
    <property type="term" value="C:plasma membrane raft"/>
    <property type="evidence" value="ECO:0000314"/>
    <property type="project" value="TAIR"/>
</dbReference>
<dbReference type="GO" id="GO:0009506">
    <property type="term" value="C:plasmodesma"/>
    <property type="evidence" value="ECO:0007005"/>
    <property type="project" value="TAIR"/>
</dbReference>
<dbReference type="GO" id="GO:0009536">
    <property type="term" value="C:plastid"/>
    <property type="evidence" value="ECO:0007005"/>
    <property type="project" value="TAIR"/>
</dbReference>
<dbReference type="GO" id="GO:0071456">
    <property type="term" value="P:cellular response to hypoxia"/>
    <property type="evidence" value="ECO:0000270"/>
    <property type="project" value="TAIR"/>
</dbReference>
<dbReference type="GO" id="GO:0006897">
    <property type="term" value="P:endocytosis"/>
    <property type="evidence" value="ECO:0000270"/>
    <property type="project" value="TAIR"/>
</dbReference>
<dbReference type="GO" id="GO:0010324">
    <property type="term" value="P:membrane invagination"/>
    <property type="evidence" value="ECO:0000315"/>
    <property type="project" value="TAIR"/>
</dbReference>
<dbReference type="CDD" id="cd03399">
    <property type="entry name" value="SPFH_flotillin"/>
    <property type="match status" value="1"/>
</dbReference>
<dbReference type="FunFam" id="3.30.479.30:FF:000015">
    <property type="entry name" value="Flotillin-like protein 2"/>
    <property type="match status" value="1"/>
</dbReference>
<dbReference type="Gene3D" id="3.30.479.30">
    <property type="entry name" value="Band 7 domain"/>
    <property type="match status" value="1"/>
</dbReference>
<dbReference type="InterPro" id="IPR001107">
    <property type="entry name" value="Band_7"/>
</dbReference>
<dbReference type="InterPro" id="IPR036013">
    <property type="entry name" value="Band_7/SPFH_dom_sf"/>
</dbReference>
<dbReference type="InterPro" id="IPR027705">
    <property type="entry name" value="Flotillin_fam"/>
</dbReference>
<dbReference type="PANTHER" id="PTHR13806:SF31">
    <property type="entry name" value="FLOTILLIN-LIKE PROTEIN 1-RELATED"/>
    <property type="match status" value="1"/>
</dbReference>
<dbReference type="PANTHER" id="PTHR13806">
    <property type="entry name" value="FLOTILLIN-RELATED"/>
    <property type="match status" value="1"/>
</dbReference>
<dbReference type="Pfam" id="PF01145">
    <property type="entry name" value="Band_7"/>
    <property type="match status" value="1"/>
</dbReference>
<dbReference type="SUPFAM" id="SSF117892">
    <property type="entry name" value="Band 7/SPFH domain"/>
    <property type="match status" value="1"/>
</dbReference>
<reference key="1">
    <citation type="journal article" date="2000" name="Nature">
        <title>Sequence and analysis of chromosome 5 of the plant Arabidopsis thaliana.</title>
        <authorList>
            <person name="Tabata S."/>
            <person name="Kaneko T."/>
            <person name="Nakamura Y."/>
            <person name="Kotani H."/>
            <person name="Kato T."/>
            <person name="Asamizu E."/>
            <person name="Miyajima N."/>
            <person name="Sasamoto S."/>
            <person name="Kimura T."/>
            <person name="Hosouchi T."/>
            <person name="Kawashima K."/>
            <person name="Kohara M."/>
            <person name="Matsumoto M."/>
            <person name="Matsuno A."/>
            <person name="Muraki A."/>
            <person name="Nakayama S."/>
            <person name="Nakazaki N."/>
            <person name="Naruo K."/>
            <person name="Okumura S."/>
            <person name="Shinpo S."/>
            <person name="Takeuchi C."/>
            <person name="Wada T."/>
            <person name="Watanabe A."/>
            <person name="Yamada M."/>
            <person name="Yasuda M."/>
            <person name="Sato S."/>
            <person name="de la Bastide M."/>
            <person name="Huang E."/>
            <person name="Spiegel L."/>
            <person name="Gnoj L."/>
            <person name="O'Shaughnessy A."/>
            <person name="Preston R."/>
            <person name="Habermann K."/>
            <person name="Murray J."/>
            <person name="Johnson D."/>
            <person name="Rohlfing T."/>
            <person name="Nelson J."/>
            <person name="Stoneking T."/>
            <person name="Pepin K."/>
            <person name="Spieth J."/>
            <person name="Sekhon M."/>
            <person name="Armstrong J."/>
            <person name="Becker M."/>
            <person name="Belter E."/>
            <person name="Cordum H."/>
            <person name="Cordes M."/>
            <person name="Courtney L."/>
            <person name="Courtney W."/>
            <person name="Dante M."/>
            <person name="Du H."/>
            <person name="Edwards J."/>
            <person name="Fryman J."/>
            <person name="Haakensen B."/>
            <person name="Lamar E."/>
            <person name="Latreille P."/>
            <person name="Leonard S."/>
            <person name="Meyer R."/>
            <person name="Mulvaney E."/>
            <person name="Ozersky P."/>
            <person name="Riley A."/>
            <person name="Strowmatt C."/>
            <person name="Wagner-McPherson C."/>
            <person name="Wollam A."/>
            <person name="Yoakum M."/>
            <person name="Bell M."/>
            <person name="Dedhia N."/>
            <person name="Parnell L."/>
            <person name="Shah R."/>
            <person name="Rodriguez M."/>
            <person name="Hoon See L."/>
            <person name="Vil D."/>
            <person name="Baker J."/>
            <person name="Kirchoff K."/>
            <person name="Toth K."/>
            <person name="King L."/>
            <person name="Bahret A."/>
            <person name="Miller B."/>
            <person name="Marra M.A."/>
            <person name="Martienssen R."/>
            <person name="McCombie W.R."/>
            <person name="Wilson R.K."/>
            <person name="Murphy G."/>
            <person name="Bancroft I."/>
            <person name="Volckaert G."/>
            <person name="Wambutt R."/>
            <person name="Duesterhoeft A."/>
            <person name="Stiekema W."/>
            <person name="Pohl T."/>
            <person name="Entian K.-D."/>
            <person name="Terryn N."/>
            <person name="Hartley N."/>
            <person name="Bent E."/>
            <person name="Johnson S."/>
            <person name="Langham S.-A."/>
            <person name="McCullagh B."/>
            <person name="Robben J."/>
            <person name="Grymonprez B."/>
            <person name="Zimmermann W."/>
            <person name="Ramsperger U."/>
            <person name="Wedler H."/>
            <person name="Balke K."/>
            <person name="Wedler E."/>
            <person name="Peters S."/>
            <person name="van Staveren M."/>
            <person name="Dirkse W."/>
            <person name="Mooijman P."/>
            <person name="Klein Lankhorst R."/>
            <person name="Weitzenegger T."/>
            <person name="Bothe G."/>
            <person name="Rose M."/>
            <person name="Hauf J."/>
            <person name="Berneiser S."/>
            <person name="Hempel S."/>
            <person name="Feldpausch M."/>
            <person name="Lamberth S."/>
            <person name="Villarroel R."/>
            <person name="Gielen J."/>
            <person name="Ardiles W."/>
            <person name="Bents O."/>
            <person name="Lemcke K."/>
            <person name="Kolesov G."/>
            <person name="Mayer K.F.X."/>
            <person name="Rudd S."/>
            <person name="Schoof H."/>
            <person name="Schueller C."/>
            <person name="Zaccaria P."/>
            <person name="Mewes H.-W."/>
            <person name="Bevan M."/>
            <person name="Fransz P.F."/>
        </authorList>
    </citation>
    <scope>NUCLEOTIDE SEQUENCE [LARGE SCALE GENOMIC DNA]</scope>
    <source>
        <strain>cv. Columbia</strain>
    </source>
</reference>
<reference key="2">
    <citation type="journal article" date="2017" name="Plant J.">
        <title>Araport11: a complete reannotation of the Arabidopsis thaliana reference genome.</title>
        <authorList>
            <person name="Cheng C.Y."/>
            <person name="Krishnakumar V."/>
            <person name="Chan A.P."/>
            <person name="Thibaud-Nissen F."/>
            <person name="Schobel S."/>
            <person name="Town C.D."/>
        </authorList>
    </citation>
    <scope>GENOME REANNOTATION</scope>
    <source>
        <strain>cv. Columbia</strain>
    </source>
</reference>
<reference key="3">
    <citation type="submission" date="2005-05" db="EMBL/GenBank/DDBJ databases">
        <title>Arabidopsis ORF Clones.</title>
        <authorList>
            <person name="Kim C.J."/>
            <person name="Chen H."/>
            <person name="Cheuk R."/>
            <person name="Shinn P."/>
            <person name="Ecker J.R."/>
        </authorList>
    </citation>
    <scope>NUCLEOTIDE SEQUENCE [LARGE SCALE MRNA]</scope>
    <source>
        <strain>cv. Columbia</strain>
    </source>
</reference>
<reference key="4">
    <citation type="submission" date="2006-07" db="EMBL/GenBank/DDBJ databases">
        <title>Large-scale analysis of RIKEN Arabidopsis full-length (RAFL) cDNAs.</title>
        <authorList>
            <person name="Totoki Y."/>
            <person name="Seki M."/>
            <person name="Ishida J."/>
            <person name="Nakajima M."/>
            <person name="Enju A."/>
            <person name="Kamiya A."/>
            <person name="Narusaka M."/>
            <person name="Shin-i T."/>
            <person name="Nakagawa M."/>
            <person name="Sakamoto N."/>
            <person name="Oishi K."/>
            <person name="Kohara Y."/>
            <person name="Kobayashi M."/>
            <person name="Toyoda A."/>
            <person name="Sakaki Y."/>
            <person name="Sakurai T."/>
            <person name="Iida K."/>
            <person name="Akiyama K."/>
            <person name="Satou M."/>
            <person name="Toyoda T."/>
            <person name="Konagaya A."/>
            <person name="Carninci P."/>
            <person name="Kawai J."/>
            <person name="Hayashizaki Y."/>
            <person name="Shinozaki K."/>
        </authorList>
    </citation>
    <scope>NUCLEOTIDE SEQUENCE [LARGE SCALE MRNA]</scope>
    <source>
        <strain>cv. Columbia</strain>
    </source>
</reference>
<reference key="5">
    <citation type="submission" date="2006-08" db="EMBL/GenBank/DDBJ databases">
        <title>Arabidopsis ORF Clones.</title>
        <authorList>
            <person name="Quinitio C."/>
            <person name="Chen H."/>
            <person name="Kim C.J."/>
            <person name="Shinn P."/>
            <person name="Ecker J.R."/>
        </authorList>
    </citation>
    <scope>NUCLEOTIDE SEQUENCE [LARGE SCALE MRNA]</scope>
    <source>
        <strain>cv. Columbia</strain>
    </source>
</reference>
<reference key="6">
    <citation type="journal article" date="2005" name="Plant Physiol.">
        <title>Analysis of detergent-resistant membranes in Arabidopsis. Evidence for plasma membrane lipid rafts.</title>
        <authorList>
            <person name="Borner G.H."/>
            <person name="Sherrier D.J."/>
            <person name="Weimar T."/>
            <person name="Michaelson L.V."/>
            <person name="Hawkins N.D."/>
            <person name="Macaskill A."/>
            <person name="Napier J.A."/>
            <person name="Beale M.H."/>
            <person name="Lilley K.S."/>
            <person name="Dupree P."/>
        </authorList>
    </citation>
    <scope>IDENTIFICATION</scope>
    <scope>SUBCELLULAR LOCATION</scope>
</reference>
<protein>
    <recommendedName>
        <fullName>Flotillin-like protein 1</fullName>
        <shortName>AtFLOT1</shortName>
    </recommendedName>
    <alternativeName>
        <fullName>Nodulin-like protein 1</fullName>
    </alternativeName>
</protein>
<feature type="chain" id="PRO_0000395209" description="Flotillin-like protein 1">
    <location>
        <begin position="1"/>
        <end position="470"/>
    </location>
</feature>
<feature type="coiled-coil region" evidence="2">
    <location>
        <begin position="305"/>
        <end position="354"/>
    </location>
</feature>
<feature type="lipid moiety-binding region" description="S-palmitoyl cysteine" evidence="2">
    <location>
        <position position="35"/>
    </location>
</feature>
<accession>Q501E6</accession>
<organism>
    <name type="scientific">Arabidopsis thaliana</name>
    <name type="common">Mouse-ear cress</name>
    <dbReference type="NCBI Taxonomy" id="3702"/>
    <lineage>
        <taxon>Eukaryota</taxon>
        <taxon>Viridiplantae</taxon>
        <taxon>Streptophyta</taxon>
        <taxon>Embryophyta</taxon>
        <taxon>Tracheophyta</taxon>
        <taxon>Spermatophyta</taxon>
        <taxon>Magnoliopsida</taxon>
        <taxon>eudicotyledons</taxon>
        <taxon>Gunneridae</taxon>
        <taxon>Pentapetalae</taxon>
        <taxon>rosids</taxon>
        <taxon>malvids</taxon>
        <taxon>Brassicales</taxon>
        <taxon>Brassicaceae</taxon>
        <taxon>Camelineae</taxon>
        <taxon>Arabidopsis</taxon>
    </lineage>
</organism>